<name>Y2273_MYCTO</name>
<dbReference type="EMBL" id="AE000516">
    <property type="protein sequence ID" value="AAK46617.1"/>
    <property type="molecule type" value="Genomic_DNA"/>
</dbReference>
<dbReference type="PIR" id="E70730">
    <property type="entry name" value="E70730"/>
</dbReference>
<dbReference type="RefSeq" id="WP_003411678.1">
    <property type="nucleotide sequence ID" value="NZ_KK341227.1"/>
</dbReference>
<dbReference type="SMR" id="P9WLF2"/>
<dbReference type="KEGG" id="mtc:MT2334"/>
<dbReference type="PATRIC" id="fig|83331.31.peg.2510"/>
<dbReference type="HOGENOM" id="CLU_150487_4_0_11"/>
<dbReference type="Proteomes" id="UP000001020">
    <property type="component" value="Chromosome"/>
</dbReference>
<dbReference type="GO" id="GO:0005886">
    <property type="term" value="C:plasma membrane"/>
    <property type="evidence" value="ECO:0007669"/>
    <property type="project" value="UniProtKB-SubCell"/>
</dbReference>
<dbReference type="InterPro" id="IPR003807">
    <property type="entry name" value="DUF202"/>
</dbReference>
<dbReference type="Pfam" id="PF02656">
    <property type="entry name" value="DUF202"/>
    <property type="match status" value="1"/>
</dbReference>
<accession>P9WLF2</accession>
<accession>L0T948</accession>
<accession>P64971</accession>
<accession>Q50690</accession>
<protein>
    <recommendedName>
        <fullName>Uncharacterized protein MT2334</fullName>
    </recommendedName>
</protein>
<organism>
    <name type="scientific">Mycobacterium tuberculosis (strain CDC 1551 / Oshkosh)</name>
    <dbReference type="NCBI Taxonomy" id="83331"/>
    <lineage>
        <taxon>Bacteria</taxon>
        <taxon>Bacillati</taxon>
        <taxon>Actinomycetota</taxon>
        <taxon>Actinomycetes</taxon>
        <taxon>Mycobacteriales</taxon>
        <taxon>Mycobacteriaceae</taxon>
        <taxon>Mycobacterium</taxon>
        <taxon>Mycobacterium tuberculosis complex</taxon>
    </lineage>
</organism>
<proteinExistence type="predicted"/>
<comment type="subcellular location">
    <subcellularLocation>
        <location evidence="2">Cell membrane</location>
        <topology evidence="2">Multi-pass membrane protein</topology>
    </subcellularLocation>
</comment>
<feature type="chain" id="PRO_0000427489" description="Uncharacterized protein MT2334">
    <location>
        <begin position="1"/>
        <end position="109"/>
    </location>
</feature>
<feature type="transmembrane region" description="Helical" evidence="1">
    <location>
        <begin position="18"/>
        <end position="38"/>
    </location>
</feature>
<feature type="transmembrane region" description="Helical" evidence="1">
    <location>
        <begin position="48"/>
        <end position="68"/>
    </location>
</feature>
<evidence type="ECO:0000255" key="1"/>
<evidence type="ECO:0000305" key="2"/>
<keyword id="KW-1003">Cell membrane</keyword>
<keyword id="KW-0472">Membrane</keyword>
<keyword id="KW-1185">Reference proteome</keyword>
<keyword id="KW-0812">Transmembrane</keyword>
<keyword id="KW-1133">Transmembrane helix</keyword>
<gene>
    <name type="ordered locus">MT2334</name>
</gene>
<sequence>MNRHSTAASDRGLQAERTTLAWTRTAFALLVNGVLLTLKDTQGADGPAGLIPAGLAGAAASCCYVIALQRQRALSHRPLPARITPRGQVHILATAVLVLMVVTAFAQLL</sequence>
<reference key="1">
    <citation type="journal article" date="2002" name="J. Bacteriol.">
        <title>Whole-genome comparison of Mycobacterium tuberculosis clinical and laboratory strains.</title>
        <authorList>
            <person name="Fleischmann R.D."/>
            <person name="Alland D."/>
            <person name="Eisen J.A."/>
            <person name="Carpenter L."/>
            <person name="White O."/>
            <person name="Peterson J.D."/>
            <person name="DeBoy R.T."/>
            <person name="Dodson R.J."/>
            <person name="Gwinn M.L."/>
            <person name="Haft D.H."/>
            <person name="Hickey E.K."/>
            <person name="Kolonay J.F."/>
            <person name="Nelson W.C."/>
            <person name="Umayam L.A."/>
            <person name="Ermolaeva M.D."/>
            <person name="Salzberg S.L."/>
            <person name="Delcher A."/>
            <person name="Utterback T.R."/>
            <person name="Weidman J.F."/>
            <person name="Khouri H.M."/>
            <person name="Gill J."/>
            <person name="Mikula A."/>
            <person name="Bishai W."/>
            <person name="Jacobs W.R. Jr."/>
            <person name="Venter J.C."/>
            <person name="Fraser C.M."/>
        </authorList>
    </citation>
    <scope>NUCLEOTIDE SEQUENCE [LARGE SCALE GENOMIC DNA]</scope>
    <source>
        <strain>CDC 1551 / Oshkosh</strain>
    </source>
</reference>